<comment type="function">
    <text evidence="1">DNA-dependent RNA polymerase catalyzes the transcription of DNA into RNA using the four ribonucleoside triphosphates as substrates.</text>
</comment>
<comment type="catalytic activity">
    <reaction evidence="1">
        <text>RNA(n) + a ribonucleoside 5'-triphosphate = RNA(n+1) + diphosphate</text>
        <dbReference type="Rhea" id="RHEA:21248"/>
        <dbReference type="Rhea" id="RHEA-COMP:14527"/>
        <dbReference type="Rhea" id="RHEA-COMP:17342"/>
        <dbReference type="ChEBI" id="CHEBI:33019"/>
        <dbReference type="ChEBI" id="CHEBI:61557"/>
        <dbReference type="ChEBI" id="CHEBI:140395"/>
        <dbReference type="EC" id="2.7.7.6"/>
    </reaction>
</comment>
<comment type="subunit">
    <text evidence="1">The RNAP catalytic core consists of 2 alpha, 1 beta, 1 beta' and 1 omega subunit. When a sigma factor is associated with the core the holoenzyme is formed, which can initiate transcription.</text>
</comment>
<comment type="similarity">
    <text evidence="1">Belongs to the RNA polymerase beta chain family.</text>
</comment>
<comment type="sequence caution" evidence="3">
    <conflict type="erroneous initiation">
        <sequence resource="EMBL-CDS" id="BAF40100"/>
    </conflict>
</comment>
<reference key="1">
    <citation type="submission" date="2006-12" db="EMBL/GenBank/DDBJ databases">
        <title>Bifidobacterium adolescentis complete genome sequence.</title>
        <authorList>
            <person name="Suzuki T."/>
            <person name="Tsuda Y."/>
            <person name="Kanou N."/>
            <person name="Inoue T."/>
            <person name="Kumazaki K."/>
            <person name="Nagano S."/>
            <person name="Hirai S."/>
            <person name="Tanaka K."/>
            <person name="Watanabe K."/>
        </authorList>
    </citation>
    <scope>NUCLEOTIDE SEQUENCE [LARGE SCALE GENOMIC DNA]</scope>
    <source>
        <strain>ATCC 15703 / DSM 20083 / NCTC 11814 / E194a</strain>
    </source>
</reference>
<name>RPOB_BIFAA</name>
<keyword id="KW-0240">DNA-directed RNA polymerase</keyword>
<keyword id="KW-0548">Nucleotidyltransferase</keyword>
<keyword id="KW-1185">Reference proteome</keyword>
<keyword id="KW-0804">Transcription</keyword>
<keyword id="KW-0808">Transferase</keyword>
<accession>A1A317</accession>
<protein>
    <recommendedName>
        <fullName evidence="1">DNA-directed RNA polymerase subunit beta</fullName>
        <shortName evidence="1">RNAP subunit beta</shortName>
        <ecNumber evidence="1">2.7.7.6</ecNumber>
    </recommendedName>
    <alternativeName>
        <fullName evidence="1">RNA polymerase subunit beta</fullName>
    </alternativeName>
    <alternativeName>
        <fullName evidence="1">Transcriptase subunit beta</fullName>
    </alternativeName>
</protein>
<proteinExistence type="inferred from homology"/>
<gene>
    <name evidence="1" type="primary">rpoB</name>
    <name type="ordered locus">BAD_1319</name>
</gene>
<organism>
    <name type="scientific">Bifidobacterium adolescentis (strain ATCC 15703 / DSM 20083 / NCTC 11814 / E194a)</name>
    <dbReference type="NCBI Taxonomy" id="367928"/>
    <lineage>
        <taxon>Bacteria</taxon>
        <taxon>Bacillati</taxon>
        <taxon>Actinomycetota</taxon>
        <taxon>Actinomycetes</taxon>
        <taxon>Bifidobacteriales</taxon>
        <taxon>Bifidobacteriaceae</taxon>
        <taxon>Bifidobacterium</taxon>
    </lineage>
</organism>
<feature type="chain" id="PRO_0000300284" description="DNA-directed RNA polymerase subunit beta">
    <location>
        <begin position="1"/>
        <end position="1186"/>
    </location>
</feature>
<feature type="region of interest" description="Disordered" evidence="2">
    <location>
        <begin position="1149"/>
        <end position="1186"/>
    </location>
</feature>
<evidence type="ECO:0000255" key="1">
    <source>
        <dbReference type="HAMAP-Rule" id="MF_01321"/>
    </source>
</evidence>
<evidence type="ECO:0000256" key="2">
    <source>
        <dbReference type="SAM" id="MobiDB-lite"/>
    </source>
</evidence>
<evidence type="ECO:0000305" key="3"/>
<dbReference type="EC" id="2.7.7.6" evidence="1"/>
<dbReference type="EMBL" id="AP009256">
    <property type="protein sequence ID" value="BAF40100.1"/>
    <property type="status" value="ALT_INIT"/>
    <property type="molecule type" value="Genomic_DNA"/>
</dbReference>
<dbReference type="RefSeq" id="WP_041777404.1">
    <property type="nucleotide sequence ID" value="NC_008618.1"/>
</dbReference>
<dbReference type="SMR" id="A1A317"/>
<dbReference type="STRING" id="367928.BAD_1319"/>
<dbReference type="PaxDb" id="1680-BADO_1407"/>
<dbReference type="GeneID" id="4556643"/>
<dbReference type="KEGG" id="bad:BAD_1319"/>
<dbReference type="HOGENOM" id="CLU_000524_4_3_11"/>
<dbReference type="Proteomes" id="UP000008702">
    <property type="component" value="Chromosome"/>
</dbReference>
<dbReference type="GO" id="GO:0000428">
    <property type="term" value="C:DNA-directed RNA polymerase complex"/>
    <property type="evidence" value="ECO:0007669"/>
    <property type="project" value="UniProtKB-KW"/>
</dbReference>
<dbReference type="GO" id="GO:0003677">
    <property type="term" value="F:DNA binding"/>
    <property type="evidence" value="ECO:0007669"/>
    <property type="project" value="UniProtKB-UniRule"/>
</dbReference>
<dbReference type="GO" id="GO:0003899">
    <property type="term" value="F:DNA-directed RNA polymerase activity"/>
    <property type="evidence" value="ECO:0007669"/>
    <property type="project" value="UniProtKB-UniRule"/>
</dbReference>
<dbReference type="GO" id="GO:0032549">
    <property type="term" value="F:ribonucleoside binding"/>
    <property type="evidence" value="ECO:0007669"/>
    <property type="project" value="InterPro"/>
</dbReference>
<dbReference type="GO" id="GO:0006351">
    <property type="term" value="P:DNA-templated transcription"/>
    <property type="evidence" value="ECO:0007669"/>
    <property type="project" value="UniProtKB-UniRule"/>
</dbReference>
<dbReference type="CDD" id="cd00653">
    <property type="entry name" value="RNA_pol_B_RPB2"/>
    <property type="match status" value="1"/>
</dbReference>
<dbReference type="FunFam" id="3.90.1800.10:FF:000001">
    <property type="entry name" value="DNA-directed RNA polymerase subunit beta"/>
    <property type="match status" value="1"/>
</dbReference>
<dbReference type="Gene3D" id="2.40.50.100">
    <property type="match status" value="1"/>
</dbReference>
<dbReference type="Gene3D" id="2.40.50.150">
    <property type="match status" value="1"/>
</dbReference>
<dbReference type="Gene3D" id="3.90.1100.10">
    <property type="match status" value="1"/>
</dbReference>
<dbReference type="Gene3D" id="2.30.150.10">
    <property type="entry name" value="DNA-directed RNA polymerase, beta subunit, external 1 domain"/>
    <property type="match status" value="1"/>
</dbReference>
<dbReference type="Gene3D" id="2.40.270.10">
    <property type="entry name" value="DNA-directed RNA polymerase, subunit 2, domain 6"/>
    <property type="match status" value="1"/>
</dbReference>
<dbReference type="Gene3D" id="3.90.1800.10">
    <property type="entry name" value="RNA polymerase alpha subunit dimerisation domain"/>
    <property type="match status" value="1"/>
</dbReference>
<dbReference type="Gene3D" id="3.90.1110.10">
    <property type="entry name" value="RNA polymerase Rpb2, domain 2"/>
    <property type="match status" value="1"/>
</dbReference>
<dbReference type="HAMAP" id="MF_01321">
    <property type="entry name" value="RNApol_bact_RpoB"/>
    <property type="match status" value="1"/>
</dbReference>
<dbReference type="InterPro" id="IPR042107">
    <property type="entry name" value="DNA-dir_RNA_pol_bsu_ext_1_sf"/>
</dbReference>
<dbReference type="InterPro" id="IPR019462">
    <property type="entry name" value="DNA-dir_RNA_pol_bsu_external_1"/>
</dbReference>
<dbReference type="InterPro" id="IPR015712">
    <property type="entry name" value="DNA-dir_RNA_pol_su2"/>
</dbReference>
<dbReference type="InterPro" id="IPR007120">
    <property type="entry name" value="DNA-dir_RNAP_su2_dom"/>
</dbReference>
<dbReference type="InterPro" id="IPR037033">
    <property type="entry name" value="DNA-dir_RNAP_su2_hyb_sf"/>
</dbReference>
<dbReference type="InterPro" id="IPR010243">
    <property type="entry name" value="RNA_pol_bsu_bac"/>
</dbReference>
<dbReference type="InterPro" id="IPR007121">
    <property type="entry name" value="RNA_pol_bsu_CS"/>
</dbReference>
<dbReference type="InterPro" id="IPR007644">
    <property type="entry name" value="RNA_pol_bsu_protrusion"/>
</dbReference>
<dbReference type="InterPro" id="IPR007642">
    <property type="entry name" value="RNA_pol_Rpb2_2"/>
</dbReference>
<dbReference type="InterPro" id="IPR037034">
    <property type="entry name" value="RNA_pol_Rpb2_2_sf"/>
</dbReference>
<dbReference type="InterPro" id="IPR007645">
    <property type="entry name" value="RNA_pol_Rpb2_3"/>
</dbReference>
<dbReference type="InterPro" id="IPR007641">
    <property type="entry name" value="RNA_pol_Rpb2_7"/>
</dbReference>
<dbReference type="InterPro" id="IPR014724">
    <property type="entry name" value="RNA_pol_RPB2_OB-fold"/>
</dbReference>
<dbReference type="NCBIfam" id="NF001616">
    <property type="entry name" value="PRK00405.1"/>
    <property type="match status" value="1"/>
</dbReference>
<dbReference type="NCBIfam" id="TIGR02013">
    <property type="entry name" value="rpoB"/>
    <property type="match status" value="1"/>
</dbReference>
<dbReference type="PANTHER" id="PTHR20856">
    <property type="entry name" value="DNA-DIRECTED RNA POLYMERASE I SUBUNIT 2"/>
    <property type="match status" value="1"/>
</dbReference>
<dbReference type="Pfam" id="PF04563">
    <property type="entry name" value="RNA_pol_Rpb2_1"/>
    <property type="match status" value="1"/>
</dbReference>
<dbReference type="Pfam" id="PF04561">
    <property type="entry name" value="RNA_pol_Rpb2_2"/>
    <property type="match status" value="1"/>
</dbReference>
<dbReference type="Pfam" id="PF04565">
    <property type="entry name" value="RNA_pol_Rpb2_3"/>
    <property type="match status" value="1"/>
</dbReference>
<dbReference type="Pfam" id="PF10385">
    <property type="entry name" value="RNA_pol_Rpb2_45"/>
    <property type="match status" value="1"/>
</dbReference>
<dbReference type="Pfam" id="PF00562">
    <property type="entry name" value="RNA_pol_Rpb2_6"/>
    <property type="match status" value="1"/>
</dbReference>
<dbReference type="Pfam" id="PF04560">
    <property type="entry name" value="RNA_pol_Rpb2_7"/>
    <property type="match status" value="1"/>
</dbReference>
<dbReference type="SUPFAM" id="SSF64484">
    <property type="entry name" value="beta and beta-prime subunits of DNA dependent RNA-polymerase"/>
    <property type="match status" value="1"/>
</dbReference>
<dbReference type="PROSITE" id="PS01166">
    <property type="entry name" value="RNA_POL_BETA"/>
    <property type="match status" value="1"/>
</dbReference>
<sequence>MAEATTNTTTIIARADQHDIDLHKASDRVNFGSIREPIDVPYLLGVQTDSFDWLIGNERWQKRVQEDLENGTNTVPHTSGLDEVFQEISPIENFAQTMSLTFSDPYFEEPRHTVQECKEKDYTYSAPLYVNAEFENGDTGEIKSQTVFMGDFPLQTPHGTFIIGGTERVIVSQLVRSPGVYFDRSQDRTSDKEVFGAKIIPSRGAWLEFEIDKRDVLGVRVDRKRKQSAIVFLMAIGMTKDEIADAFKDYPLVMDALAKETVQTQDEALTDLYRKIRPADTPTPEAGKNLLDSFYFNTKRYDLARVGRYKINRKLGLEKDVNDRSLSREDIIATIKYLVTLHAGETKFPGKRDGQDVDLRVDVDDIDHFGNRRIRQVGELIQNQLRTGLSRMERVVRERMTTQDPEAITPQSLINIRPVNATIKEFFGTSQLSQFMDQNNPLAGVTNKRRLSALGPGGLSRDRASMEVRDVHPSHFGRMCPIESPEGPNIGLIGSLATFGRINPFGFIETPYRKVVNGHVTDEVEYMTADRDAEHVIAQANQELDENGNFVKKQALARVGEEEAVDVPVSSVDYMDVSPRQMVSVGASLIPFLEHDEGHRALMGTNMQRQAVPLIESERPLVGTGAEWRAAVDSGDVILAEKPGVVTYVSADIIRTMNDDGTTSSYKLAKFQRSNQTTCYNQVPLIHDGERVEAGTVLADGPATQKGEMALGKNLLIAFMPWNGYNYEDAVIISQRLVQDDTLSSIHIEEYEIDARETKLGAEEITRDLPNVGEDAVANLDERGIIRIGAEVEAGDILVGKVTPKGETELTPEERLLRAIFGEKSREVRDTSLRVPHGETGTVIAVKEITREDAEEDGDELPNGVNQMIRVYIAQHRKITQGDKLSGRHGNKGVISRILPEEDMPFLADGTPVDIMLNPLGVPSRMNLGQVLELHLGWIAHAGWDISLDPDAEAAWKKYVPQGAEKGAPGTPVATPVFDGVRPETIKGLLSCTLPDRDGNKLVGPDGKATLFDGRTGEPFPKPISVGYMYMLKLHHLVDDKIHARSTGPYSMITQQPLGGKAQFGGQRFGEMEVWALEAYGAAYTLHEMMTTKSDDVDGRVRVYGAIVKGENLPPAGIPESFKVLLKEMQSLSLNVEVLNADGVAIDMKEEDDDPSTSSDDLGFNIGARPDAAAKEDQVAEEPEFQ</sequence>